<comment type="function">
    <text evidence="1">Protease subunit of a proteasome-like degradation complex believed to be a general protein degrading machinery.</text>
</comment>
<comment type="catalytic activity">
    <reaction evidence="1">
        <text>ATP-dependent cleavage of peptide bonds with broad specificity.</text>
        <dbReference type="EC" id="3.4.25.2"/>
    </reaction>
</comment>
<comment type="activity regulation">
    <text evidence="1">Allosterically activated by HslU binding.</text>
</comment>
<comment type="subunit">
    <text evidence="1">A double ring-shaped homohexamer of HslV is capped on each side by a ring-shaped HslU homohexamer. The assembly of the HslU/HslV complex is dependent on binding of ATP.</text>
</comment>
<comment type="subcellular location">
    <subcellularLocation>
        <location evidence="1">Cytoplasm</location>
    </subcellularLocation>
</comment>
<comment type="similarity">
    <text evidence="1">Belongs to the peptidase T1B family. HslV subfamily.</text>
</comment>
<accession>A1JI09</accession>
<name>HSLV_YERE8</name>
<evidence type="ECO:0000255" key="1">
    <source>
        <dbReference type="HAMAP-Rule" id="MF_00248"/>
    </source>
</evidence>
<proteinExistence type="inferred from homology"/>
<reference key="1">
    <citation type="journal article" date="2006" name="PLoS Genet.">
        <title>The complete genome sequence and comparative genome analysis of the high pathogenicity Yersinia enterocolitica strain 8081.</title>
        <authorList>
            <person name="Thomson N.R."/>
            <person name="Howard S."/>
            <person name="Wren B.W."/>
            <person name="Holden M.T.G."/>
            <person name="Crossman L."/>
            <person name="Challis G.L."/>
            <person name="Churcher C."/>
            <person name="Mungall K."/>
            <person name="Brooks K."/>
            <person name="Chillingworth T."/>
            <person name="Feltwell T."/>
            <person name="Abdellah Z."/>
            <person name="Hauser H."/>
            <person name="Jagels K."/>
            <person name="Maddison M."/>
            <person name="Moule S."/>
            <person name="Sanders M."/>
            <person name="Whitehead S."/>
            <person name="Quail M.A."/>
            <person name="Dougan G."/>
            <person name="Parkhill J."/>
            <person name="Prentice M.B."/>
        </authorList>
    </citation>
    <scope>NUCLEOTIDE SEQUENCE [LARGE SCALE GENOMIC DNA]</scope>
    <source>
        <strain>NCTC 13174 / 8081</strain>
    </source>
</reference>
<gene>
    <name evidence="1" type="primary">hslV</name>
    <name type="ordered locus">YE0105</name>
</gene>
<feature type="chain" id="PRO_1000012689" description="ATP-dependent protease subunit HslV">
    <location>
        <begin position="1"/>
        <end position="174"/>
    </location>
</feature>
<feature type="active site" evidence="1">
    <location>
        <position position="2"/>
    </location>
</feature>
<feature type="binding site" evidence="1">
    <location>
        <position position="157"/>
    </location>
    <ligand>
        <name>Na(+)</name>
        <dbReference type="ChEBI" id="CHEBI:29101"/>
    </ligand>
</feature>
<feature type="binding site" evidence="1">
    <location>
        <position position="160"/>
    </location>
    <ligand>
        <name>Na(+)</name>
        <dbReference type="ChEBI" id="CHEBI:29101"/>
    </ligand>
</feature>
<feature type="binding site" evidence="1">
    <location>
        <position position="163"/>
    </location>
    <ligand>
        <name>Na(+)</name>
        <dbReference type="ChEBI" id="CHEBI:29101"/>
    </ligand>
</feature>
<protein>
    <recommendedName>
        <fullName evidence="1">ATP-dependent protease subunit HslV</fullName>
        <ecNumber evidence="1">3.4.25.2</ecNumber>
    </recommendedName>
</protein>
<keyword id="KW-0021">Allosteric enzyme</keyword>
<keyword id="KW-0963">Cytoplasm</keyword>
<keyword id="KW-0378">Hydrolase</keyword>
<keyword id="KW-0479">Metal-binding</keyword>
<keyword id="KW-0645">Protease</keyword>
<keyword id="KW-0915">Sodium</keyword>
<keyword id="KW-0346">Stress response</keyword>
<keyword id="KW-0888">Threonine protease</keyword>
<dbReference type="EC" id="3.4.25.2" evidence="1"/>
<dbReference type="EMBL" id="AM286415">
    <property type="protein sequence ID" value="CAL10247.1"/>
    <property type="molecule type" value="Genomic_DNA"/>
</dbReference>
<dbReference type="RefSeq" id="WP_004714422.1">
    <property type="nucleotide sequence ID" value="NC_008800.1"/>
</dbReference>
<dbReference type="RefSeq" id="YP_001004499.1">
    <property type="nucleotide sequence ID" value="NC_008800.1"/>
</dbReference>
<dbReference type="SMR" id="A1JI09"/>
<dbReference type="MEROPS" id="T01.006"/>
<dbReference type="GeneID" id="93973029"/>
<dbReference type="KEGG" id="yen:YE0105"/>
<dbReference type="PATRIC" id="fig|393305.7.peg.195"/>
<dbReference type="eggNOG" id="COG5405">
    <property type="taxonomic scope" value="Bacteria"/>
</dbReference>
<dbReference type="HOGENOM" id="CLU_093872_1_0_6"/>
<dbReference type="OrthoDB" id="9804884at2"/>
<dbReference type="Proteomes" id="UP000000642">
    <property type="component" value="Chromosome"/>
</dbReference>
<dbReference type="GO" id="GO:0009376">
    <property type="term" value="C:HslUV protease complex"/>
    <property type="evidence" value="ECO:0007669"/>
    <property type="project" value="UniProtKB-UniRule"/>
</dbReference>
<dbReference type="GO" id="GO:0005839">
    <property type="term" value="C:proteasome core complex"/>
    <property type="evidence" value="ECO:0007669"/>
    <property type="project" value="InterPro"/>
</dbReference>
<dbReference type="GO" id="GO:0046872">
    <property type="term" value="F:metal ion binding"/>
    <property type="evidence" value="ECO:0007669"/>
    <property type="project" value="UniProtKB-KW"/>
</dbReference>
<dbReference type="GO" id="GO:0004298">
    <property type="term" value="F:threonine-type endopeptidase activity"/>
    <property type="evidence" value="ECO:0007669"/>
    <property type="project" value="UniProtKB-KW"/>
</dbReference>
<dbReference type="GO" id="GO:0051603">
    <property type="term" value="P:proteolysis involved in protein catabolic process"/>
    <property type="evidence" value="ECO:0007669"/>
    <property type="project" value="InterPro"/>
</dbReference>
<dbReference type="CDD" id="cd01913">
    <property type="entry name" value="protease_HslV"/>
    <property type="match status" value="1"/>
</dbReference>
<dbReference type="FunFam" id="3.60.20.10:FF:000002">
    <property type="entry name" value="ATP-dependent protease subunit HslV"/>
    <property type="match status" value="1"/>
</dbReference>
<dbReference type="Gene3D" id="3.60.20.10">
    <property type="entry name" value="Glutamine Phosphoribosylpyrophosphate, subunit 1, domain 1"/>
    <property type="match status" value="1"/>
</dbReference>
<dbReference type="HAMAP" id="MF_00248">
    <property type="entry name" value="HslV"/>
    <property type="match status" value="1"/>
</dbReference>
<dbReference type="InterPro" id="IPR022281">
    <property type="entry name" value="ATP-dep_Prtase_HsIV_su"/>
</dbReference>
<dbReference type="InterPro" id="IPR029055">
    <property type="entry name" value="Ntn_hydrolases_N"/>
</dbReference>
<dbReference type="InterPro" id="IPR001353">
    <property type="entry name" value="Proteasome_sua/b"/>
</dbReference>
<dbReference type="InterPro" id="IPR023333">
    <property type="entry name" value="Proteasome_suB-type"/>
</dbReference>
<dbReference type="NCBIfam" id="TIGR03692">
    <property type="entry name" value="ATP_dep_HslV"/>
    <property type="match status" value="1"/>
</dbReference>
<dbReference type="NCBIfam" id="NF003964">
    <property type="entry name" value="PRK05456.1"/>
    <property type="match status" value="1"/>
</dbReference>
<dbReference type="PANTHER" id="PTHR32194:SF0">
    <property type="entry name" value="ATP-DEPENDENT PROTEASE SUBUNIT HSLV"/>
    <property type="match status" value="1"/>
</dbReference>
<dbReference type="PANTHER" id="PTHR32194">
    <property type="entry name" value="METALLOPROTEASE TLDD"/>
    <property type="match status" value="1"/>
</dbReference>
<dbReference type="Pfam" id="PF00227">
    <property type="entry name" value="Proteasome"/>
    <property type="match status" value="1"/>
</dbReference>
<dbReference type="PIRSF" id="PIRSF039093">
    <property type="entry name" value="HslV"/>
    <property type="match status" value="1"/>
</dbReference>
<dbReference type="SUPFAM" id="SSF56235">
    <property type="entry name" value="N-terminal nucleophile aminohydrolases (Ntn hydrolases)"/>
    <property type="match status" value="1"/>
</dbReference>
<dbReference type="PROSITE" id="PS51476">
    <property type="entry name" value="PROTEASOME_BETA_2"/>
    <property type="match status" value="1"/>
</dbReference>
<sequence>MTTIVSVRRNGHVVIGGDGQVTLGNTVMKGNAKKVRRLYNNKVIAGFAGGTADAFTLFELFERKLEMHQGHLTKAAVELAKDWRTDRMLRKLEALLAVADETASLIITGNGDVVQPEDDLIAIGSGGPYAQSAARALLENTELGARDIVEKSLSIAGDICIYTNRFQTIEELTY</sequence>
<organism>
    <name type="scientific">Yersinia enterocolitica serotype O:8 / biotype 1B (strain NCTC 13174 / 8081)</name>
    <dbReference type="NCBI Taxonomy" id="393305"/>
    <lineage>
        <taxon>Bacteria</taxon>
        <taxon>Pseudomonadati</taxon>
        <taxon>Pseudomonadota</taxon>
        <taxon>Gammaproteobacteria</taxon>
        <taxon>Enterobacterales</taxon>
        <taxon>Yersiniaceae</taxon>
        <taxon>Yersinia</taxon>
    </lineage>
</organism>